<reference key="1">
    <citation type="journal article" date="1992" name="Virus Res.">
        <title>Gene translocations in poxviruses: the fowlpox virus thymidine kinase gene is flanked by 15 bp direct repeats and occupies the locus which in vaccinia virus is occupied by the ribonucleotide reductase large subunit gene.</title>
        <authorList>
            <person name="Binns M.M."/>
            <person name="Boursnell M.E.G."/>
            <person name="Skinner M.A."/>
        </authorList>
    </citation>
    <scope>NUCLEOTIDE SEQUENCE [GENOMIC DNA]</scope>
    <source>
        <strain>FP-9 / Isolate HP-440</strain>
    </source>
</reference>
<reference key="2">
    <citation type="journal article" date="2000" name="J. Virol.">
        <title>The genome of fowlpox virus.</title>
        <authorList>
            <person name="Afonso C.L."/>
            <person name="Tulman E.R."/>
            <person name="Lu Z."/>
            <person name="Zsak L."/>
            <person name="Kutish G.F."/>
            <person name="Rock D.L."/>
        </authorList>
    </citation>
    <scope>NUCLEOTIDE SEQUENCE [LARGE SCALE GENOMIC DNA]</scope>
</reference>
<evidence type="ECO:0000250" key="1"/>
<evidence type="ECO:0000255" key="2">
    <source>
        <dbReference type="PROSITE-ProRule" id="PRU00541"/>
    </source>
</evidence>
<evidence type="ECO:0000255" key="3">
    <source>
        <dbReference type="PROSITE-ProRule" id="PRU00542"/>
    </source>
</evidence>
<evidence type="ECO:0000305" key="4"/>
<feature type="chain" id="PRO_0000055187" description="RNA helicase NPH-II">
    <location>
        <begin position="1"/>
        <end position="682"/>
    </location>
</feature>
<feature type="domain" description="Helicase ATP-binding" evidence="2">
    <location>
        <begin position="181"/>
        <end position="354"/>
    </location>
</feature>
<feature type="domain" description="Helicase C-terminal" evidence="3">
    <location>
        <begin position="386"/>
        <end position="551"/>
    </location>
</feature>
<feature type="short sequence motif" description="DEXH box">
    <location>
        <begin position="303"/>
        <end position="306"/>
    </location>
</feature>
<feature type="binding site" evidence="2">
    <location>
        <begin position="194"/>
        <end position="201"/>
    </location>
    <ligand>
        <name>ATP</name>
        <dbReference type="ChEBI" id="CHEBI:30616"/>
    </ligand>
</feature>
<organismHost>
    <name type="scientific">Vertebrata</name>
    <dbReference type="NCBI Taxonomy" id="7742"/>
</organismHost>
<organism>
    <name type="scientific">Fowlpox virus (strain NVSL)</name>
    <name type="common">FPV</name>
    <dbReference type="NCBI Taxonomy" id="928301"/>
    <lineage>
        <taxon>Viruses</taxon>
        <taxon>Varidnaviria</taxon>
        <taxon>Bamfordvirae</taxon>
        <taxon>Nucleocytoviricota</taxon>
        <taxon>Pokkesviricetes</taxon>
        <taxon>Chitovirales</taxon>
        <taxon>Poxviridae</taxon>
        <taxon>Chordopoxvirinae</taxon>
        <taxon>Avipoxvirus</taxon>
        <taxon>Fowlpox virus</taxon>
    </lineage>
</organism>
<keyword id="KW-0067">ATP-binding</keyword>
<keyword id="KW-0347">Helicase</keyword>
<keyword id="KW-0378">Hydrolase</keyword>
<keyword id="KW-0547">Nucleotide-binding</keyword>
<keyword id="KW-1185">Reference proteome</keyword>
<keyword id="KW-0804">Transcription</keyword>
<keyword id="KW-0946">Virion</keyword>
<name>NPH2_FOWPN</name>
<proteinExistence type="inferred from homology"/>
<protein>
    <recommendedName>
        <fullName>RNA helicase NPH-II</fullName>
        <ecNumber>3.6.4.13</ecNumber>
    </recommendedName>
    <alternativeName>
        <fullName>Nucleoside triphosphatase II</fullName>
        <shortName>NTPase II</shortName>
    </alternativeName>
    <alternativeName>
        <fullName>Nucleoside triphosphate phosphohydrolase II</fullName>
        <shortName>NPH II</shortName>
    </alternativeName>
</protein>
<accession>O72904</accession>
<sequence length="682" mass="79808">MTTNDLFSIYAFSNMYDIFPRKYSQKELEEYHRKNPLFFSYTIFPVIKHRWSKAYICFQNNVYMLNIELDTSKPYDRVPIQHLIDIRPISTDIKKEIYKISDKTFITFECYSYLKCKGYNSIYDITLDDKRGLLSAGNILSIFSSNKQMPEKSSIGILKNPKPFTVIKFKSLSLITQLQIFELLRKRKQIVVTGSTGIGKTSQLPKVIMWYNYLFGGWDNLDRVRFDYISRPIVLSLPRVALVKSNGINFLQSLGFSDFEGSPVELRYGGKTEHTTRQHDGIVLSTNKLTSYSLSNYNIIIVDEIHEHDRIADIIISVLRKNIDTIHSLVLMSATLEDDRDRLQEFLPDVEFYHIEGPVLYSIKEIYVKNKYSYDSKAYTEEEKKNISTTLNWCRPRNGMCGILFLASVSQCISYKKYLEKSNSDMDFIIIHGKIPDITEVLNAVQRPGRERPCILVSTPYLESSITIRTATHVYDTGRVYVPKPFGGDQLFISKSMMTQRKGRVGRVSKGIYVYFYDMCLLKPIKSIDHEFLYEYIVYAKKFKLSLPNDLLVIPSDKDMLKKSEEYIKSFNISFDRLFEIYVNYFVNMVEYVKIYNKGGKKAENLDMFERNDILTGETLKDIKNLQLLVKINTTTRRKKMYCYKGEILFGPYMNTVIRLSSKQLYRNYVYMLTERSFTLYR</sequence>
<dbReference type="EC" id="3.6.4.13"/>
<dbReference type="EMBL" id="AJ223385">
    <property type="protein sequence ID" value="CAA11299.1"/>
    <property type="molecule type" value="Genomic_DNA"/>
</dbReference>
<dbReference type="EMBL" id="AF198100">
    <property type="protein sequence ID" value="AAF44426.1"/>
    <property type="molecule type" value="Genomic_DNA"/>
</dbReference>
<dbReference type="PIR" id="G48563">
    <property type="entry name" value="G48563"/>
</dbReference>
<dbReference type="RefSeq" id="NP_039045.1">
    <property type="nucleotide sequence ID" value="NC_002188.1"/>
</dbReference>
<dbReference type="SMR" id="O72904"/>
<dbReference type="GeneID" id="1486630"/>
<dbReference type="KEGG" id="vg:1486630"/>
<dbReference type="Proteomes" id="UP000008597">
    <property type="component" value="Segment"/>
</dbReference>
<dbReference type="GO" id="GO:0044423">
    <property type="term" value="C:virion component"/>
    <property type="evidence" value="ECO:0007669"/>
    <property type="project" value="UniProtKB-KW"/>
</dbReference>
<dbReference type="GO" id="GO:0005524">
    <property type="term" value="F:ATP binding"/>
    <property type="evidence" value="ECO:0007669"/>
    <property type="project" value="UniProtKB-KW"/>
</dbReference>
<dbReference type="GO" id="GO:0016887">
    <property type="term" value="F:ATP hydrolysis activity"/>
    <property type="evidence" value="ECO:0007669"/>
    <property type="project" value="RHEA"/>
</dbReference>
<dbReference type="GO" id="GO:0003723">
    <property type="term" value="F:RNA binding"/>
    <property type="evidence" value="ECO:0007669"/>
    <property type="project" value="TreeGrafter"/>
</dbReference>
<dbReference type="GO" id="GO:0003724">
    <property type="term" value="F:RNA helicase activity"/>
    <property type="evidence" value="ECO:0007669"/>
    <property type="project" value="UniProtKB-EC"/>
</dbReference>
<dbReference type="Gene3D" id="3.40.50.300">
    <property type="entry name" value="P-loop containing nucleotide triphosphate hydrolases"/>
    <property type="match status" value="2"/>
</dbReference>
<dbReference type="InterPro" id="IPR011545">
    <property type="entry name" value="DEAD/DEAH_box_helicase_dom"/>
</dbReference>
<dbReference type="InterPro" id="IPR014001">
    <property type="entry name" value="Helicase_ATP-bd"/>
</dbReference>
<dbReference type="InterPro" id="IPR001650">
    <property type="entry name" value="Helicase_C-like"/>
</dbReference>
<dbReference type="InterPro" id="IPR021892">
    <property type="entry name" value="NPH-II"/>
</dbReference>
<dbReference type="InterPro" id="IPR027417">
    <property type="entry name" value="P-loop_NTPase"/>
</dbReference>
<dbReference type="PANTHER" id="PTHR18934">
    <property type="entry name" value="ATP-DEPENDENT RNA HELICASE"/>
    <property type="match status" value="1"/>
</dbReference>
<dbReference type="PANTHER" id="PTHR18934:SF99">
    <property type="entry name" value="ATP-DEPENDENT RNA HELICASE DHX37-RELATED"/>
    <property type="match status" value="1"/>
</dbReference>
<dbReference type="Pfam" id="PF00270">
    <property type="entry name" value="DEAD"/>
    <property type="match status" value="1"/>
</dbReference>
<dbReference type="Pfam" id="PF00271">
    <property type="entry name" value="Helicase_C"/>
    <property type="match status" value="1"/>
</dbReference>
<dbReference type="Pfam" id="PF12011">
    <property type="entry name" value="NPH-II"/>
    <property type="match status" value="1"/>
</dbReference>
<dbReference type="SMART" id="SM00487">
    <property type="entry name" value="DEXDc"/>
    <property type="match status" value="1"/>
</dbReference>
<dbReference type="SMART" id="SM00490">
    <property type="entry name" value="HELICc"/>
    <property type="match status" value="1"/>
</dbReference>
<dbReference type="SUPFAM" id="SSF52540">
    <property type="entry name" value="P-loop containing nucleoside triphosphate hydrolases"/>
    <property type="match status" value="1"/>
</dbReference>
<dbReference type="PROSITE" id="PS51192">
    <property type="entry name" value="HELICASE_ATP_BIND_1"/>
    <property type="match status" value="1"/>
</dbReference>
<dbReference type="PROSITE" id="PS51194">
    <property type="entry name" value="HELICASE_CTER"/>
    <property type="match status" value="1"/>
</dbReference>
<comment type="function">
    <text evidence="1">NTP-dependent helicase that catalyzes unidirectional unwinding of 3'tailed duplex RNAs and plays an important role during transcription of early mRNAs, presumably by preventing R-loop formation behind the elongating RNA polymerase. Might also play a role in the export of newly synthesized mRNA chains out of the core into the cytoplasm. Required for replication and propagation of viral particles (By similarity).</text>
</comment>
<comment type="catalytic activity">
    <reaction>
        <text>ATP + H2O = ADP + phosphate + H(+)</text>
        <dbReference type="Rhea" id="RHEA:13065"/>
        <dbReference type="ChEBI" id="CHEBI:15377"/>
        <dbReference type="ChEBI" id="CHEBI:15378"/>
        <dbReference type="ChEBI" id="CHEBI:30616"/>
        <dbReference type="ChEBI" id="CHEBI:43474"/>
        <dbReference type="ChEBI" id="CHEBI:456216"/>
        <dbReference type="EC" id="3.6.4.13"/>
    </reaction>
</comment>
<comment type="subunit">
    <text>Monomer.</text>
</comment>
<comment type="subcellular location">
    <subcellularLocation>
        <location>Virion</location>
    </subcellularLocation>
    <text evidence="1">Localizes to the virion core.</text>
</comment>
<comment type="similarity">
    <text evidence="4">Belongs to the DEAD box helicase family. DEAH subfamily.</text>
</comment>
<gene>
    <name type="primary">NPH2</name>
    <name type="ordered locus">FPV082</name>
    <name type="ORF">FPI8R</name>
</gene>